<comment type="function">
    <text evidence="1">Reversibly catalyzes the transfer of the carbamoyl group from carbamoyl phosphate (CP) to the N(epsilon) atom of ornithine (ORN) to produce L-citrulline.</text>
</comment>
<comment type="catalytic activity">
    <reaction>
        <text>carbamoyl phosphate + L-ornithine = L-citrulline + phosphate + H(+)</text>
        <dbReference type="Rhea" id="RHEA:19513"/>
        <dbReference type="ChEBI" id="CHEBI:15378"/>
        <dbReference type="ChEBI" id="CHEBI:43474"/>
        <dbReference type="ChEBI" id="CHEBI:46911"/>
        <dbReference type="ChEBI" id="CHEBI:57743"/>
        <dbReference type="ChEBI" id="CHEBI:58228"/>
        <dbReference type="EC" id="2.1.3.3"/>
    </reaction>
</comment>
<comment type="pathway">
    <text>Amino-acid biosynthesis; L-arginine biosynthesis; L-arginine from L-ornithine and carbamoyl phosphate: step 1/3.</text>
</comment>
<comment type="subcellular location">
    <subcellularLocation>
        <location evidence="1">Cytoplasm</location>
    </subcellularLocation>
</comment>
<comment type="similarity">
    <text evidence="3">Belongs to the aspartate/ornithine carbamoyltransferase superfamily. OTCase family.</text>
</comment>
<keyword id="KW-0028">Amino-acid biosynthesis</keyword>
<keyword id="KW-0055">Arginine biosynthesis</keyword>
<keyword id="KW-0963">Cytoplasm</keyword>
<keyword id="KW-1185">Reference proteome</keyword>
<keyword id="KW-0808">Transferase</keyword>
<name>OTC_SYNY3</name>
<dbReference type="EC" id="2.1.3.3"/>
<dbReference type="EMBL" id="BA000022">
    <property type="protein sequence ID" value="BAA10847.1"/>
    <property type="molecule type" value="Genomic_DNA"/>
</dbReference>
<dbReference type="PIR" id="S76000">
    <property type="entry name" value="S76000"/>
</dbReference>
<dbReference type="SMR" id="Q55497"/>
<dbReference type="FunCoup" id="Q55497">
    <property type="interactions" value="429"/>
</dbReference>
<dbReference type="IntAct" id="Q55497">
    <property type="interactions" value="2"/>
</dbReference>
<dbReference type="STRING" id="1148.gene:10500353"/>
<dbReference type="PaxDb" id="1148-1001360"/>
<dbReference type="EnsemblBacteria" id="BAA10847">
    <property type="protein sequence ID" value="BAA10847"/>
    <property type="gene ID" value="BAA10847"/>
</dbReference>
<dbReference type="KEGG" id="syn:sll0902"/>
<dbReference type="eggNOG" id="COG0078">
    <property type="taxonomic scope" value="Bacteria"/>
</dbReference>
<dbReference type="InParanoid" id="Q55497"/>
<dbReference type="PhylomeDB" id="Q55497"/>
<dbReference type="UniPathway" id="UPA00068">
    <property type="reaction ID" value="UER00112"/>
</dbReference>
<dbReference type="Proteomes" id="UP000001425">
    <property type="component" value="Chromosome"/>
</dbReference>
<dbReference type="GO" id="GO:0005737">
    <property type="term" value="C:cytoplasm"/>
    <property type="evidence" value="ECO:0007669"/>
    <property type="project" value="UniProtKB-SubCell"/>
</dbReference>
<dbReference type="GO" id="GO:0016597">
    <property type="term" value="F:amino acid binding"/>
    <property type="evidence" value="ECO:0007669"/>
    <property type="project" value="InterPro"/>
</dbReference>
<dbReference type="GO" id="GO:0004585">
    <property type="term" value="F:ornithine carbamoyltransferase activity"/>
    <property type="evidence" value="ECO:0000318"/>
    <property type="project" value="GO_Central"/>
</dbReference>
<dbReference type="GO" id="GO:0042450">
    <property type="term" value="P:arginine biosynthetic process via ornithine"/>
    <property type="evidence" value="ECO:0000318"/>
    <property type="project" value="GO_Central"/>
</dbReference>
<dbReference type="GO" id="GO:0019240">
    <property type="term" value="P:citrulline biosynthetic process"/>
    <property type="evidence" value="ECO:0000318"/>
    <property type="project" value="GO_Central"/>
</dbReference>
<dbReference type="GO" id="GO:0006526">
    <property type="term" value="P:L-arginine biosynthetic process"/>
    <property type="evidence" value="ECO:0007669"/>
    <property type="project" value="UniProtKB-UniRule"/>
</dbReference>
<dbReference type="FunFam" id="3.40.50.1370:FF:000008">
    <property type="entry name" value="Ornithine carbamoyltransferase"/>
    <property type="match status" value="1"/>
</dbReference>
<dbReference type="Gene3D" id="3.40.50.1370">
    <property type="entry name" value="Aspartate/ornithine carbamoyltransferase"/>
    <property type="match status" value="2"/>
</dbReference>
<dbReference type="HAMAP" id="MF_01109">
    <property type="entry name" value="OTCase"/>
    <property type="match status" value="1"/>
</dbReference>
<dbReference type="InterPro" id="IPR006132">
    <property type="entry name" value="Asp/Orn_carbamoyltranf_P-bd"/>
</dbReference>
<dbReference type="InterPro" id="IPR006130">
    <property type="entry name" value="Asp/Orn_carbamoylTrfase"/>
</dbReference>
<dbReference type="InterPro" id="IPR036901">
    <property type="entry name" value="Asp/Orn_carbamoylTrfase_sf"/>
</dbReference>
<dbReference type="InterPro" id="IPR006131">
    <property type="entry name" value="Asp_carbamoyltransf_Asp/Orn-bd"/>
</dbReference>
<dbReference type="InterPro" id="IPR002292">
    <property type="entry name" value="Orn/put_carbamltrans"/>
</dbReference>
<dbReference type="InterPro" id="IPR024904">
    <property type="entry name" value="OTCase_ArgI"/>
</dbReference>
<dbReference type="NCBIfam" id="TIGR00658">
    <property type="entry name" value="orni_carb_tr"/>
    <property type="match status" value="1"/>
</dbReference>
<dbReference type="NCBIfam" id="NF001986">
    <property type="entry name" value="PRK00779.1"/>
    <property type="match status" value="1"/>
</dbReference>
<dbReference type="PANTHER" id="PTHR45753">
    <property type="entry name" value="ORNITHINE CARBAMOYLTRANSFERASE, MITOCHONDRIAL"/>
    <property type="match status" value="1"/>
</dbReference>
<dbReference type="PANTHER" id="PTHR45753:SF3">
    <property type="entry name" value="ORNITHINE TRANSCARBAMYLASE, MITOCHONDRIAL"/>
    <property type="match status" value="1"/>
</dbReference>
<dbReference type="Pfam" id="PF00185">
    <property type="entry name" value="OTCace"/>
    <property type="match status" value="1"/>
</dbReference>
<dbReference type="Pfam" id="PF02729">
    <property type="entry name" value="OTCace_N"/>
    <property type="match status" value="1"/>
</dbReference>
<dbReference type="PRINTS" id="PR00100">
    <property type="entry name" value="AOTCASE"/>
</dbReference>
<dbReference type="PRINTS" id="PR00102">
    <property type="entry name" value="OTCASE"/>
</dbReference>
<dbReference type="SUPFAM" id="SSF53671">
    <property type="entry name" value="Aspartate/ornithine carbamoyltransferase"/>
    <property type="match status" value="1"/>
</dbReference>
<dbReference type="PROSITE" id="PS00097">
    <property type="entry name" value="CARBAMOYLTRANSFERASE"/>
    <property type="match status" value="1"/>
</dbReference>
<evidence type="ECO:0000250" key="1"/>
<evidence type="ECO:0000255" key="2">
    <source>
        <dbReference type="HAMAP-Rule" id="MF_01109"/>
    </source>
</evidence>
<evidence type="ECO:0000305" key="3"/>
<gene>
    <name type="primary">argF</name>
    <name type="ordered locus">sll0902</name>
</gene>
<reference key="1">
    <citation type="journal article" date="1995" name="DNA Res.">
        <title>Sequence analysis of the genome of the unicellular cyanobacterium Synechocystis sp. strain PCC6803. I. Sequence features in the 1 Mb region from map positions 64% to 92% of the genome.</title>
        <authorList>
            <person name="Kaneko T."/>
            <person name="Tanaka A."/>
            <person name="Sato S."/>
            <person name="Kotani H."/>
            <person name="Sazuka T."/>
            <person name="Miyajima N."/>
            <person name="Sugiura M."/>
            <person name="Tabata S."/>
        </authorList>
    </citation>
    <scope>NUCLEOTIDE SEQUENCE [LARGE SCALE GENOMIC DNA]</scope>
    <source>
        <strain>ATCC 27184 / PCC 6803 / N-1</strain>
    </source>
</reference>
<reference key="2">
    <citation type="journal article" date="1996" name="DNA Res.">
        <title>Sequence analysis of the genome of the unicellular cyanobacterium Synechocystis sp. strain PCC6803. II. Sequence determination of the entire genome and assignment of potential protein-coding regions.</title>
        <authorList>
            <person name="Kaneko T."/>
            <person name="Sato S."/>
            <person name="Kotani H."/>
            <person name="Tanaka A."/>
            <person name="Asamizu E."/>
            <person name="Nakamura Y."/>
            <person name="Miyajima N."/>
            <person name="Hirosawa M."/>
            <person name="Sugiura M."/>
            <person name="Sasamoto S."/>
            <person name="Kimura T."/>
            <person name="Hosouchi T."/>
            <person name="Matsuno A."/>
            <person name="Muraki A."/>
            <person name="Nakazaki N."/>
            <person name="Naruo K."/>
            <person name="Okumura S."/>
            <person name="Shimpo S."/>
            <person name="Takeuchi C."/>
            <person name="Wada T."/>
            <person name="Watanabe A."/>
            <person name="Yamada M."/>
            <person name="Yasuda M."/>
            <person name="Tabata S."/>
        </authorList>
    </citation>
    <scope>NUCLEOTIDE SEQUENCE [LARGE SCALE GENOMIC DNA]</scope>
    <source>
        <strain>ATCC 27184 / PCC 6803 / Kazusa</strain>
    </source>
</reference>
<feature type="chain" id="PRO_0000113048" description="Ornithine carbamoyltransferase">
    <location>
        <begin position="1"/>
        <end position="308"/>
    </location>
</feature>
<feature type="binding site" evidence="2">
    <location>
        <begin position="53"/>
        <end position="56"/>
    </location>
    <ligand>
        <name>carbamoyl phosphate</name>
        <dbReference type="ChEBI" id="CHEBI:58228"/>
    </ligand>
</feature>
<feature type="binding site" evidence="2">
    <location>
        <position position="80"/>
    </location>
    <ligand>
        <name>carbamoyl phosphate</name>
        <dbReference type="ChEBI" id="CHEBI:58228"/>
    </ligand>
</feature>
<feature type="binding site" evidence="2">
    <location>
        <position position="104"/>
    </location>
    <ligand>
        <name>carbamoyl phosphate</name>
        <dbReference type="ChEBI" id="CHEBI:58228"/>
    </ligand>
</feature>
<feature type="binding site" evidence="2">
    <location>
        <begin position="131"/>
        <end position="134"/>
    </location>
    <ligand>
        <name>carbamoyl phosphate</name>
        <dbReference type="ChEBI" id="CHEBI:58228"/>
    </ligand>
</feature>
<feature type="binding site" evidence="2">
    <location>
        <position position="162"/>
    </location>
    <ligand>
        <name>L-ornithine</name>
        <dbReference type="ChEBI" id="CHEBI:46911"/>
    </ligand>
</feature>
<feature type="binding site" evidence="2">
    <location>
        <position position="225"/>
    </location>
    <ligand>
        <name>L-ornithine</name>
        <dbReference type="ChEBI" id="CHEBI:46911"/>
    </ligand>
</feature>
<feature type="binding site" evidence="2">
    <location>
        <begin position="229"/>
        <end position="230"/>
    </location>
    <ligand>
        <name>L-ornithine</name>
        <dbReference type="ChEBI" id="CHEBI:46911"/>
    </ligand>
</feature>
<feature type="binding site" evidence="2">
    <location>
        <begin position="265"/>
        <end position="266"/>
    </location>
    <ligand>
        <name>carbamoyl phosphate</name>
        <dbReference type="ChEBI" id="CHEBI:58228"/>
    </ligand>
</feature>
<feature type="binding site" evidence="2">
    <location>
        <position position="293"/>
    </location>
    <ligand>
        <name>carbamoyl phosphate</name>
        <dbReference type="ChEBI" id="CHEBI:58228"/>
    </ligand>
</feature>
<protein>
    <recommendedName>
        <fullName>Ornithine carbamoyltransferase</fullName>
        <shortName>OTCase</shortName>
        <ecNumber>2.1.3.3</ecNumber>
    </recommendedName>
</protein>
<sequence>MGIKALAGRDLLAIADLTIEEMKSLLQLAADLKSGVLKPHCRKILGLLFYKASTRTRVSFTAAMYQLGGQVLDLNPSVTQVGRGEPIQDTARVLDRYIDILAVRTFKQTDLQTFADHAKMPIINALSDLEHPCQILADLQTIKECFGKLEGLTVTYLGDGNNVAHSLILGGVMMGMTVRVATPKNYEPLAEIVQQAQQIAAPGGKVELTDDPKAAAQGSHILYTDVWASMGQEDLADSRIPIFQPYQINQELLALADPEAIVLHCLPAHRGEEITDAVMEGPQSRLWDQAENRMHAQKALMVALLGLV</sequence>
<proteinExistence type="inferred from homology"/>
<organism>
    <name type="scientific">Synechocystis sp. (strain ATCC 27184 / PCC 6803 / Kazusa)</name>
    <dbReference type="NCBI Taxonomy" id="1111708"/>
    <lineage>
        <taxon>Bacteria</taxon>
        <taxon>Bacillati</taxon>
        <taxon>Cyanobacteriota</taxon>
        <taxon>Cyanophyceae</taxon>
        <taxon>Synechococcales</taxon>
        <taxon>Merismopediaceae</taxon>
        <taxon>Synechocystis</taxon>
    </lineage>
</organism>
<accession>Q55497</accession>